<keyword id="KW-0472">Membrane</keyword>
<keyword id="KW-1185">Reference proteome</keyword>
<keyword id="KW-0677">Repeat</keyword>
<keyword id="KW-0762">Sugar transport</keyword>
<keyword id="KW-0812">Transmembrane</keyword>
<keyword id="KW-1133">Transmembrane helix</keyword>
<keyword id="KW-0813">Transport</keyword>
<accession>P53631</accession>
<accession>D6W1P7</accession>
<gene>
    <name type="primary">HXT17</name>
    <name type="ordered locus">YNR072W</name>
    <name type="ORF">N3615</name>
</gene>
<sequence>MQSSTESDRDIQDGPDADIHVAPPVEKEWSDGFDDNEVINGDNVEPPKRGLIGYLVIYLLCYPISFGGFLPGWDSGITAGFINMDNFKMNFGSYKHSTGEYYLSNVRMGLLVAMFSIGCAIGGLIFARLADTLGRRLAIVIVVLVYMVGAIIQISSNHKWYQYFVGKIIYGLGAGGCSVLCPMLLSEIAPTDLRGGLVSLYQLNMTFGIFLGYCSVYGTRKYDNTAQWRVPLGLCFLWTLIIIIGMLLVPESPRYLIECERHEEARASIAKINKVSPEDPWVLKQADEINAGVLAQRELGEASWKELFSVKTKVLQRLITGILVQTFLQLTGENYFFFYGTTIFKSVGLTDGFETSIVLGTVNFFSTIIAVMVVDKIGRRKCLLFGAAGMMACMVIFASIGVKCLYPHGQDGPSSKGAGNAMIVFTCFYIFCFATTWAPVAYIVVAESFPSKVKSRAMSISTACNWLWQFLIGFFTPFITGSIHFYYGYVFVGCLVAMFLYVFFFLPETIGLSLEEIQLLYEEGIKPWKSASWVPPSRRGIPSEESKTEKKDWKKFLKFSKGSD</sequence>
<name>HXT17_YEAST</name>
<reference key="1">
    <citation type="journal article" date="1997" name="Nature">
        <title>The nucleotide sequence of Saccharomyces cerevisiae chromosome XIV and its evolutionary implications.</title>
        <authorList>
            <person name="Philippsen P."/>
            <person name="Kleine K."/>
            <person name="Poehlmann R."/>
            <person name="Duesterhoeft A."/>
            <person name="Hamberg K."/>
            <person name="Hegemann J.H."/>
            <person name="Obermaier B."/>
            <person name="Urrestarazu L.A."/>
            <person name="Aert R."/>
            <person name="Albermann K."/>
            <person name="Altmann R."/>
            <person name="Andre B."/>
            <person name="Baladron V."/>
            <person name="Ballesta J.P.G."/>
            <person name="Becam A.-M."/>
            <person name="Beinhauer J.D."/>
            <person name="Boskovic J."/>
            <person name="Buitrago M.J."/>
            <person name="Bussereau F."/>
            <person name="Coster F."/>
            <person name="Crouzet M."/>
            <person name="D'Angelo M."/>
            <person name="Dal Pero F."/>
            <person name="De Antoni A."/>
            <person name="del Rey F."/>
            <person name="Doignon F."/>
            <person name="Domdey H."/>
            <person name="Dubois E."/>
            <person name="Fiedler T.A."/>
            <person name="Fleig U."/>
            <person name="Floeth M."/>
            <person name="Fritz C."/>
            <person name="Gaillardin C."/>
            <person name="Garcia-Cantalejo J.M."/>
            <person name="Glansdorff N."/>
            <person name="Goffeau A."/>
            <person name="Gueldener U."/>
            <person name="Herbert C.J."/>
            <person name="Heumann K."/>
            <person name="Heuss-Neitzel D."/>
            <person name="Hilbert H."/>
            <person name="Hinni K."/>
            <person name="Iraqui Houssaini I."/>
            <person name="Jacquet M."/>
            <person name="Jimenez A."/>
            <person name="Jonniaux J.-L."/>
            <person name="Karpfinger-Hartl L."/>
            <person name="Lanfranchi G."/>
            <person name="Lepingle A."/>
            <person name="Levesque H."/>
            <person name="Lyck R."/>
            <person name="Maftahi M."/>
            <person name="Mallet L."/>
            <person name="Maurer C.T.C."/>
            <person name="Messenguy F."/>
            <person name="Mewes H.-W."/>
            <person name="Moestl D."/>
            <person name="Nasr F."/>
            <person name="Nicaud J.-M."/>
            <person name="Niedenthal R.K."/>
            <person name="Pandolfo D."/>
            <person name="Pierard A."/>
            <person name="Piravandi E."/>
            <person name="Planta R.J."/>
            <person name="Pohl T.M."/>
            <person name="Purnelle B."/>
            <person name="Rebischung C."/>
            <person name="Remacha M.A."/>
            <person name="Revuelta J.L."/>
            <person name="Rinke M."/>
            <person name="Saiz J.E."/>
            <person name="Sartorello F."/>
            <person name="Scherens B."/>
            <person name="Sen-Gupta M."/>
            <person name="Soler-Mira A."/>
            <person name="Urbanus J.H.M."/>
            <person name="Valle G."/>
            <person name="Van Dyck L."/>
            <person name="Verhasselt P."/>
            <person name="Vierendeels F."/>
            <person name="Vissers S."/>
            <person name="Voet M."/>
            <person name="Volckaert G."/>
            <person name="Wach A."/>
            <person name="Wambutt R."/>
            <person name="Wedler H."/>
            <person name="Zollner A."/>
            <person name="Hani J."/>
        </authorList>
    </citation>
    <scope>NUCLEOTIDE SEQUENCE [LARGE SCALE GENOMIC DNA]</scope>
    <source>
        <strain>ATCC 204508 / S288c</strain>
    </source>
</reference>
<reference key="2">
    <citation type="journal article" date="2014" name="G3 (Bethesda)">
        <title>The reference genome sequence of Saccharomyces cerevisiae: Then and now.</title>
        <authorList>
            <person name="Engel S.R."/>
            <person name="Dietrich F.S."/>
            <person name="Fisk D.G."/>
            <person name="Binkley G."/>
            <person name="Balakrishnan R."/>
            <person name="Costanzo M.C."/>
            <person name="Dwight S.S."/>
            <person name="Hitz B.C."/>
            <person name="Karra K."/>
            <person name="Nash R.S."/>
            <person name="Weng S."/>
            <person name="Wong E.D."/>
            <person name="Lloyd P."/>
            <person name="Skrzypek M.S."/>
            <person name="Miyasato S.R."/>
            <person name="Simison M."/>
            <person name="Cherry J.M."/>
        </authorList>
    </citation>
    <scope>GENOME REANNOTATION</scope>
    <source>
        <strain>ATCC 204508 / S288c</strain>
    </source>
</reference>
<comment type="function">
    <text>Probable glucose transporter.</text>
</comment>
<comment type="subcellular location">
    <subcellularLocation>
        <location>Membrane</location>
        <topology>Multi-pass membrane protein</topology>
    </subcellularLocation>
</comment>
<comment type="similarity">
    <text evidence="3">Belongs to the major facilitator superfamily. Sugar transporter (TC 2.A.1.1) family.</text>
</comment>
<organism>
    <name type="scientific">Saccharomyces cerevisiae (strain ATCC 204508 / S288c)</name>
    <name type="common">Baker's yeast</name>
    <dbReference type="NCBI Taxonomy" id="559292"/>
    <lineage>
        <taxon>Eukaryota</taxon>
        <taxon>Fungi</taxon>
        <taxon>Dikarya</taxon>
        <taxon>Ascomycota</taxon>
        <taxon>Saccharomycotina</taxon>
        <taxon>Saccharomycetes</taxon>
        <taxon>Saccharomycetales</taxon>
        <taxon>Saccharomycetaceae</taxon>
        <taxon>Saccharomyces</taxon>
    </lineage>
</organism>
<feature type="chain" id="PRO_0000050406" description="Hexose transporter HXT17">
    <location>
        <begin position="1"/>
        <end position="564"/>
    </location>
</feature>
<feature type="topological domain" description="Cytoplasmic" evidence="1">
    <location>
        <begin position="1"/>
        <end position="52"/>
    </location>
</feature>
<feature type="transmembrane region" description="Helical; Name=1" evidence="1">
    <location>
        <begin position="53"/>
        <end position="73"/>
    </location>
</feature>
<feature type="topological domain" description="Extracellular" evidence="1">
    <location>
        <begin position="74"/>
        <end position="109"/>
    </location>
</feature>
<feature type="transmembrane region" description="Helical; Name=2" evidence="1">
    <location>
        <begin position="110"/>
        <end position="130"/>
    </location>
</feature>
<feature type="topological domain" description="Cytoplasmic" evidence="1">
    <location>
        <begin position="131"/>
        <end position="136"/>
    </location>
</feature>
<feature type="transmembrane region" description="Helical; Name=3" evidence="1">
    <location>
        <begin position="137"/>
        <end position="157"/>
    </location>
</feature>
<feature type="topological domain" description="Extracellular" evidence="1">
    <location>
        <begin position="158"/>
        <end position="167"/>
    </location>
</feature>
<feature type="transmembrane region" description="Helical; Name=4" evidence="1">
    <location>
        <begin position="168"/>
        <end position="188"/>
    </location>
</feature>
<feature type="topological domain" description="Cytoplasmic" evidence="1">
    <location>
        <begin position="189"/>
        <end position="194"/>
    </location>
</feature>
<feature type="transmembrane region" description="Helical; Name=5" evidence="1">
    <location>
        <begin position="195"/>
        <end position="215"/>
    </location>
</feature>
<feature type="topological domain" description="Extracellular" evidence="1">
    <location>
        <begin position="216"/>
        <end position="229"/>
    </location>
</feature>
<feature type="transmembrane region" description="Helical; Name=6" evidence="1">
    <location>
        <begin position="230"/>
        <end position="250"/>
    </location>
</feature>
<feature type="topological domain" description="Cytoplasmic" evidence="1">
    <location>
        <begin position="251"/>
        <end position="333"/>
    </location>
</feature>
<feature type="transmembrane region" description="Helical; Name=7" evidence="1">
    <location>
        <begin position="334"/>
        <end position="350"/>
    </location>
</feature>
<feature type="topological domain" description="Extracellular" evidence="1">
    <location>
        <begin position="351"/>
        <end position="356"/>
    </location>
</feature>
<feature type="transmembrane region" description="Helical; Name=8" evidence="1">
    <location>
        <begin position="357"/>
        <end position="374"/>
    </location>
</feature>
<feature type="topological domain" description="Cytoplasmic" evidence="1">
    <location>
        <begin position="375"/>
        <end position="381"/>
    </location>
</feature>
<feature type="transmembrane region" description="Helical; Name=9" evidence="1">
    <location>
        <begin position="382"/>
        <end position="402"/>
    </location>
</feature>
<feature type="topological domain" description="Extracellular" evidence="1">
    <location>
        <begin position="403"/>
        <end position="424"/>
    </location>
</feature>
<feature type="transmembrane region" description="Helical; Name=10" evidence="1">
    <location>
        <begin position="425"/>
        <end position="445"/>
    </location>
</feature>
<feature type="topological domain" description="Cytoplasmic" evidence="1">
    <location>
        <begin position="446"/>
        <end position="462"/>
    </location>
</feature>
<feature type="transmembrane region" description="Helical; Name=11" evidence="1">
    <location>
        <begin position="463"/>
        <end position="483"/>
    </location>
</feature>
<feature type="topological domain" description="Extracellular" evidence="1">
    <location>
        <position position="484"/>
    </location>
</feature>
<feature type="transmembrane region" description="Helical; Name=12" evidence="1">
    <location>
        <begin position="485"/>
        <end position="505"/>
    </location>
</feature>
<feature type="topological domain" description="Cytoplasmic" evidence="1">
    <location>
        <begin position="506"/>
        <end position="564"/>
    </location>
</feature>
<feature type="region of interest" description="Disordered" evidence="2">
    <location>
        <begin position="1"/>
        <end position="22"/>
    </location>
</feature>
<feature type="compositionally biased region" description="Basic and acidic residues" evidence="2">
    <location>
        <begin position="1"/>
        <end position="12"/>
    </location>
</feature>
<proteinExistence type="inferred from homology"/>
<evidence type="ECO:0000255" key="1"/>
<evidence type="ECO:0000256" key="2">
    <source>
        <dbReference type="SAM" id="MobiDB-lite"/>
    </source>
</evidence>
<evidence type="ECO:0000305" key="3"/>
<protein>
    <recommendedName>
        <fullName>Hexose transporter HXT17</fullName>
    </recommendedName>
</protein>
<dbReference type="EMBL" id="Z71687">
    <property type="protein sequence ID" value="CAA96355.1"/>
    <property type="molecule type" value="Genomic_DNA"/>
</dbReference>
<dbReference type="EMBL" id="BK006947">
    <property type="protein sequence ID" value="DAA10613.1"/>
    <property type="molecule type" value="Genomic_DNA"/>
</dbReference>
<dbReference type="PIR" id="S63405">
    <property type="entry name" value="S63405"/>
</dbReference>
<dbReference type="RefSeq" id="NP_014470.1">
    <property type="nucleotide sequence ID" value="NM_001183249.1"/>
</dbReference>
<dbReference type="SMR" id="P53631"/>
<dbReference type="BioGRID" id="35898">
    <property type="interactions" value="46"/>
</dbReference>
<dbReference type="DIP" id="DIP-4810N"/>
<dbReference type="FunCoup" id="P53631">
    <property type="interactions" value="1504"/>
</dbReference>
<dbReference type="IntAct" id="P53631">
    <property type="interactions" value="1"/>
</dbReference>
<dbReference type="STRING" id="4932.YNR072W"/>
<dbReference type="PaxDb" id="4932-YNR072W"/>
<dbReference type="EnsemblFungi" id="YNR072W_mRNA">
    <property type="protein sequence ID" value="YNR072W"/>
    <property type="gene ID" value="YNR072W"/>
</dbReference>
<dbReference type="GeneID" id="855809"/>
<dbReference type="KEGG" id="sce:YNR072W"/>
<dbReference type="AGR" id="SGD:S000005355"/>
<dbReference type="SGD" id="S000005355">
    <property type="gene designation" value="HXT17"/>
</dbReference>
<dbReference type="VEuPathDB" id="FungiDB:YNR072W"/>
<dbReference type="eggNOG" id="KOG0254">
    <property type="taxonomic scope" value="Eukaryota"/>
</dbReference>
<dbReference type="GeneTree" id="ENSGT00940000176280"/>
<dbReference type="HOGENOM" id="CLU_001265_30_1_1"/>
<dbReference type="InParanoid" id="P53631"/>
<dbReference type="OMA" id="EMFQAPR"/>
<dbReference type="OrthoDB" id="2241241at2759"/>
<dbReference type="BioCyc" id="YEAST:G3O-33376-MONOMER"/>
<dbReference type="BioGRID-ORCS" id="855809">
    <property type="hits" value="0 hits in 10 CRISPR screens"/>
</dbReference>
<dbReference type="PRO" id="PR:P53631"/>
<dbReference type="Proteomes" id="UP000002311">
    <property type="component" value="Chromosome XIV"/>
</dbReference>
<dbReference type="RNAct" id="P53631">
    <property type="molecule type" value="protein"/>
</dbReference>
<dbReference type="GO" id="GO:0071944">
    <property type="term" value="C:cell periphery"/>
    <property type="evidence" value="ECO:0007005"/>
    <property type="project" value="SGD"/>
</dbReference>
<dbReference type="GO" id="GO:0000324">
    <property type="term" value="C:fungal-type vacuole"/>
    <property type="evidence" value="ECO:0007005"/>
    <property type="project" value="SGD"/>
</dbReference>
<dbReference type="GO" id="GO:0005886">
    <property type="term" value="C:plasma membrane"/>
    <property type="evidence" value="ECO:0000318"/>
    <property type="project" value="GO_Central"/>
</dbReference>
<dbReference type="GO" id="GO:0005351">
    <property type="term" value="F:carbohydrate:proton symporter activity"/>
    <property type="evidence" value="ECO:0000318"/>
    <property type="project" value="GO_Central"/>
</dbReference>
<dbReference type="GO" id="GO:0055056">
    <property type="term" value="F:D-glucose transmembrane transporter activity"/>
    <property type="evidence" value="ECO:0000315"/>
    <property type="project" value="SGD"/>
</dbReference>
<dbReference type="GO" id="GO:0005353">
    <property type="term" value="F:fructose transmembrane transporter activity"/>
    <property type="evidence" value="ECO:0000315"/>
    <property type="project" value="SGD"/>
</dbReference>
<dbReference type="GO" id="GO:0015578">
    <property type="term" value="F:mannose transmembrane transporter activity"/>
    <property type="evidence" value="ECO:0000315"/>
    <property type="project" value="SGD"/>
</dbReference>
<dbReference type="GO" id="GO:0008643">
    <property type="term" value="P:carbohydrate transport"/>
    <property type="evidence" value="ECO:0000318"/>
    <property type="project" value="GO_Central"/>
</dbReference>
<dbReference type="GO" id="GO:0008645">
    <property type="term" value="P:hexose transmembrane transport"/>
    <property type="evidence" value="ECO:0000315"/>
    <property type="project" value="SGD"/>
</dbReference>
<dbReference type="GO" id="GO:0015797">
    <property type="term" value="P:mannitol transmembrane transport"/>
    <property type="evidence" value="ECO:0000316"/>
    <property type="project" value="SGD"/>
</dbReference>
<dbReference type="GO" id="GO:0015795">
    <property type="term" value="P:sorbitol transmembrane transport"/>
    <property type="evidence" value="ECO:0000316"/>
    <property type="project" value="SGD"/>
</dbReference>
<dbReference type="CDD" id="cd17356">
    <property type="entry name" value="MFS_HXT"/>
    <property type="match status" value="1"/>
</dbReference>
<dbReference type="FunFam" id="1.20.1250.20:FF:000044">
    <property type="entry name" value="Hexose transporter Hxt3p"/>
    <property type="match status" value="1"/>
</dbReference>
<dbReference type="Gene3D" id="1.20.1250.20">
    <property type="entry name" value="MFS general substrate transporter like domains"/>
    <property type="match status" value="1"/>
</dbReference>
<dbReference type="InterPro" id="IPR020846">
    <property type="entry name" value="MFS_dom"/>
</dbReference>
<dbReference type="InterPro" id="IPR005828">
    <property type="entry name" value="MFS_sugar_transport-like"/>
</dbReference>
<dbReference type="InterPro" id="IPR050360">
    <property type="entry name" value="MFS_Sugar_Transporters"/>
</dbReference>
<dbReference type="InterPro" id="IPR036259">
    <property type="entry name" value="MFS_trans_sf"/>
</dbReference>
<dbReference type="InterPro" id="IPR003663">
    <property type="entry name" value="Sugar/inositol_transpt"/>
</dbReference>
<dbReference type="InterPro" id="IPR005829">
    <property type="entry name" value="Sugar_transporter_CS"/>
</dbReference>
<dbReference type="NCBIfam" id="TIGR00879">
    <property type="entry name" value="SP"/>
    <property type="match status" value="1"/>
</dbReference>
<dbReference type="PANTHER" id="PTHR48022:SF75">
    <property type="entry name" value="GALACTOSE TRANSPORTER-RELATED"/>
    <property type="match status" value="1"/>
</dbReference>
<dbReference type="PANTHER" id="PTHR48022">
    <property type="entry name" value="PLASTIDIC GLUCOSE TRANSPORTER 4"/>
    <property type="match status" value="1"/>
</dbReference>
<dbReference type="Pfam" id="PF00083">
    <property type="entry name" value="Sugar_tr"/>
    <property type="match status" value="1"/>
</dbReference>
<dbReference type="PRINTS" id="PR00171">
    <property type="entry name" value="SUGRTRNSPORT"/>
</dbReference>
<dbReference type="SUPFAM" id="SSF103473">
    <property type="entry name" value="MFS general substrate transporter"/>
    <property type="match status" value="1"/>
</dbReference>
<dbReference type="PROSITE" id="PS50850">
    <property type="entry name" value="MFS"/>
    <property type="match status" value="1"/>
</dbReference>
<dbReference type="PROSITE" id="PS00216">
    <property type="entry name" value="SUGAR_TRANSPORT_1"/>
    <property type="match status" value="1"/>
</dbReference>
<dbReference type="PROSITE" id="PS00217">
    <property type="entry name" value="SUGAR_TRANSPORT_2"/>
    <property type="match status" value="1"/>
</dbReference>